<comment type="function">
    <text evidence="1">Aspartyl-tRNA synthetase with relaxed tRNA specificity since it is able to aspartylate not only its cognate tRNA(Asp) but also tRNA(Asn). Reaction proceeds in two steps: L-aspartate is first activated by ATP to form Asp-AMP and then transferred to the acceptor end of tRNA(Asp/Asn).</text>
</comment>
<comment type="catalytic activity">
    <reaction evidence="1">
        <text>tRNA(Asx) + L-aspartate + ATP = L-aspartyl-tRNA(Asx) + AMP + diphosphate</text>
        <dbReference type="Rhea" id="RHEA:18349"/>
        <dbReference type="Rhea" id="RHEA-COMP:9710"/>
        <dbReference type="Rhea" id="RHEA-COMP:9711"/>
        <dbReference type="ChEBI" id="CHEBI:29991"/>
        <dbReference type="ChEBI" id="CHEBI:30616"/>
        <dbReference type="ChEBI" id="CHEBI:33019"/>
        <dbReference type="ChEBI" id="CHEBI:78442"/>
        <dbReference type="ChEBI" id="CHEBI:78516"/>
        <dbReference type="ChEBI" id="CHEBI:456215"/>
        <dbReference type="EC" id="6.1.1.23"/>
    </reaction>
</comment>
<comment type="subunit">
    <text evidence="1">Homodimer.</text>
</comment>
<comment type="subcellular location">
    <subcellularLocation>
        <location evidence="1">Cytoplasm</location>
    </subcellularLocation>
</comment>
<comment type="similarity">
    <text evidence="1">Belongs to the class-II aminoacyl-tRNA synthetase family. Type 1 subfamily.</text>
</comment>
<sequence length="590" mass="67250">MNVYRTHLCNELREEHIDQTVTLSGWVYRKRDHGKIIFVDLRDHYGITQLVFNDSDTTIFQLITTLRLESVITIKGIVKARDSSTINETLDTGSIEVIVSSINIETASEILPINIASMQDYSEDIRLTYRFLDLRRDKVKNNIILRSKVITEIRKSMENMGFIEIQTPILTSSSPEGARDYLVPSRIHHGKFYALPQAPQLFKQLLMVSGFDKYFQIAPCFRDEDARADRSPGEFYQLDIEMSFVTQEDIFNIIEPVMINIFSKFSNKTINKEFPKISYHDAMLYYGSDKPDLRNPLVIQDVTEIFRDSEFKIFNSNIKQGMVVRAIPAPNTAHNPRSFFDSKIEFAKTLGAQGLGYITFIDDSLAKGPIAKFLDKDRLDNIKLICNIKAGDSVFFVSEIADKAALFAGEVRTLLGKELNLIEENTFKFCWVIDFPYFKYDHKEKSINFFHNPFSMPQGGLEALENQDPLNILAYQYDIVCNGIEISSGAIRNHKLNIMYKAFSIAGYTKEMVDEKFKALTRAFKFGAPPHGGIAPGIDRIVMLLADVPNIREVICFPLNQSGEDLLMGSPSEIDNDHLKLLSLNIIKKT</sequence>
<organism>
    <name type="scientific">Ehrlichia ruminantium (strain Welgevonden)</name>
    <dbReference type="NCBI Taxonomy" id="254945"/>
    <lineage>
        <taxon>Bacteria</taxon>
        <taxon>Pseudomonadati</taxon>
        <taxon>Pseudomonadota</taxon>
        <taxon>Alphaproteobacteria</taxon>
        <taxon>Rickettsiales</taxon>
        <taxon>Anaplasmataceae</taxon>
        <taxon>Ehrlichia</taxon>
    </lineage>
</organism>
<name>SYDND_EHRRW</name>
<keyword id="KW-0030">Aminoacyl-tRNA synthetase</keyword>
<keyword id="KW-0067">ATP-binding</keyword>
<keyword id="KW-0963">Cytoplasm</keyword>
<keyword id="KW-0436">Ligase</keyword>
<keyword id="KW-0547">Nucleotide-binding</keyword>
<keyword id="KW-0648">Protein biosynthesis</keyword>
<feature type="chain" id="PRO_0000235528" description="Aspartate--tRNA(Asp/Asn) ligase">
    <location>
        <begin position="1"/>
        <end position="590"/>
    </location>
</feature>
<feature type="region of interest" description="Aspartate" evidence="1">
    <location>
        <begin position="200"/>
        <end position="203"/>
    </location>
</feature>
<feature type="binding site" evidence="1">
    <location>
        <position position="176"/>
    </location>
    <ligand>
        <name>L-aspartate</name>
        <dbReference type="ChEBI" id="CHEBI:29991"/>
    </ligand>
</feature>
<feature type="binding site" evidence="1">
    <location>
        <begin position="222"/>
        <end position="224"/>
    </location>
    <ligand>
        <name>ATP</name>
        <dbReference type="ChEBI" id="CHEBI:30616"/>
    </ligand>
</feature>
<feature type="binding site" evidence="1">
    <location>
        <position position="222"/>
    </location>
    <ligand>
        <name>L-aspartate</name>
        <dbReference type="ChEBI" id="CHEBI:29991"/>
    </ligand>
</feature>
<feature type="binding site" evidence="1">
    <location>
        <position position="451"/>
    </location>
    <ligand>
        <name>L-aspartate</name>
        <dbReference type="ChEBI" id="CHEBI:29991"/>
    </ligand>
</feature>
<feature type="binding site" evidence="1">
    <location>
        <position position="485"/>
    </location>
    <ligand>
        <name>ATP</name>
        <dbReference type="ChEBI" id="CHEBI:30616"/>
    </ligand>
</feature>
<feature type="binding site" evidence="1">
    <location>
        <position position="492"/>
    </location>
    <ligand>
        <name>L-aspartate</name>
        <dbReference type="ChEBI" id="CHEBI:29991"/>
    </ligand>
</feature>
<feature type="binding site" evidence="1">
    <location>
        <begin position="537"/>
        <end position="540"/>
    </location>
    <ligand>
        <name>ATP</name>
        <dbReference type="ChEBI" id="CHEBI:30616"/>
    </ligand>
</feature>
<feature type="site" description="Important for tRNA non-discrimination" evidence="1">
    <location>
        <position position="33"/>
    </location>
</feature>
<dbReference type="EC" id="6.1.1.23" evidence="1"/>
<dbReference type="EMBL" id="CR767821">
    <property type="protein sequence ID" value="CAH58398.1"/>
    <property type="molecule type" value="Genomic_DNA"/>
</dbReference>
<dbReference type="EMBL" id="CR925678">
    <property type="protein sequence ID" value="CAI27192.1"/>
    <property type="molecule type" value="Genomic_DNA"/>
</dbReference>
<dbReference type="RefSeq" id="WP_011155345.1">
    <property type="nucleotide sequence ID" value="NC_005295.2"/>
</dbReference>
<dbReference type="SMR" id="Q5HAL5"/>
<dbReference type="GeneID" id="33058151"/>
<dbReference type="KEGG" id="eru:Erum6660"/>
<dbReference type="KEGG" id="erw:ERWE_CDS_06980"/>
<dbReference type="eggNOG" id="COG0173">
    <property type="taxonomic scope" value="Bacteria"/>
</dbReference>
<dbReference type="HOGENOM" id="CLU_014330_3_2_5"/>
<dbReference type="Proteomes" id="UP000001021">
    <property type="component" value="Chromosome"/>
</dbReference>
<dbReference type="GO" id="GO:0005737">
    <property type="term" value="C:cytoplasm"/>
    <property type="evidence" value="ECO:0007669"/>
    <property type="project" value="UniProtKB-SubCell"/>
</dbReference>
<dbReference type="GO" id="GO:0004815">
    <property type="term" value="F:aspartate-tRNA ligase activity"/>
    <property type="evidence" value="ECO:0007669"/>
    <property type="project" value="UniProtKB-UniRule"/>
</dbReference>
<dbReference type="GO" id="GO:0050560">
    <property type="term" value="F:aspartate-tRNA(Asn) ligase activity"/>
    <property type="evidence" value="ECO:0007669"/>
    <property type="project" value="UniProtKB-EC"/>
</dbReference>
<dbReference type="GO" id="GO:0005524">
    <property type="term" value="F:ATP binding"/>
    <property type="evidence" value="ECO:0007669"/>
    <property type="project" value="UniProtKB-UniRule"/>
</dbReference>
<dbReference type="GO" id="GO:0003676">
    <property type="term" value="F:nucleic acid binding"/>
    <property type="evidence" value="ECO:0007669"/>
    <property type="project" value="InterPro"/>
</dbReference>
<dbReference type="GO" id="GO:0006422">
    <property type="term" value="P:aspartyl-tRNA aminoacylation"/>
    <property type="evidence" value="ECO:0007669"/>
    <property type="project" value="UniProtKB-UniRule"/>
</dbReference>
<dbReference type="CDD" id="cd00777">
    <property type="entry name" value="AspRS_core"/>
    <property type="match status" value="1"/>
</dbReference>
<dbReference type="CDD" id="cd04317">
    <property type="entry name" value="EcAspRS_like_N"/>
    <property type="match status" value="1"/>
</dbReference>
<dbReference type="Gene3D" id="3.30.930.10">
    <property type="entry name" value="Bira Bifunctional Protein, Domain 2"/>
    <property type="match status" value="1"/>
</dbReference>
<dbReference type="Gene3D" id="3.30.1360.30">
    <property type="entry name" value="GAD-like domain"/>
    <property type="match status" value="1"/>
</dbReference>
<dbReference type="Gene3D" id="2.40.50.140">
    <property type="entry name" value="Nucleic acid-binding proteins"/>
    <property type="match status" value="1"/>
</dbReference>
<dbReference type="HAMAP" id="MF_00044">
    <property type="entry name" value="Asp_tRNA_synth_type1"/>
    <property type="match status" value="1"/>
</dbReference>
<dbReference type="InterPro" id="IPR004364">
    <property type="entry name" value="Aa-tRNA-synt_II"/>
</dbReference>
<dbReference type="InterPro" id="IPR006195">
    <property type="entry name" value="aa-tRNA-synth_II"/>
</dbReference>
<dbReference type="InterPro" id="IPR045864">
    <property type="entry name" value="aa-tRNA-synth_II/BPL/LPL"/>
</dbReference>
<dbReference type="InterPro" id="IPR004524">
    <property type="entry name" value="Asp-tRNA-ligase_1"/>
</dbReference>
<dbReference type="InterPro" id="IPR047089">
    <property type="entry name" value="Asp-tRNA-ligase_1_N"/>
</dbReference>
<dbReference type="InterPro" id="IPR002312">
    <property type="entry name" value="Asp/Asn-tRNA-synth_IIb"/>
</dbReference>
<dbReference type="InterPro" id="IPR047090">
    <property type="entry name" value="AspRS_core"/>
</dbReference>
<dbReference type="InterPro" id="IPR004115">
    <property type="entry name" value="GAD-like_sf"/>
</dbReference>
<dbReference type="InterPro" id="IPR029351">
    <property type="entry name" value="GAD_dom"/>
</dbReference>
<dbReference type="InterPro" id="IPR012340">
    <property type="entry name" value="NA-bd_OB-fold"/>
</dbReference>
<dbReference type="InterPro" id="IPR004365">
    <property type="entry name" value="NA-bd_OB_tRNA"/>
</dbReference>
<dbReference type="NCBIfam" id="TIGR00459">
    <property type="entry name" value="aspS_bact"/>
    <property type="match status" value="1"/>
</dbReference>
<dbReference type="NCBIfam" id="NF001750">
    <property type="entry name" value="PRK00476.1"/>
    <property type="match status" value="1"/>
</dbReference>
<dbReference type="PANTHER" id="PTHR22594:SF5">
    <property type="entry name" value="ASPARTATE--TRNA LIGASE, MITOCHONDRIAL"/>
    <property type="match status" value="1"/>
</dbReference>
<dbReference type="PANTHER" id="PTHR22594">
    <property type="entry name" value="ASPARTYL/LYSYL-TRNA SYNTHETASE"/>
    <property type="match status" value="1"/>
</dbReference>
<dbReference type="Pfam" id="PF02938">
    <property type="entry name" value="GAD"/>
    <property type="match status" value="1"/>
</dbReference>
<dbReference type="Pfam" id="PF00152">
    <property type="entry name" value="tRNA-synt_2"/>
    <property type="match status" value="1"/>
</dbReference>
<dbReference type="Pfam" id="PF01336">
    <property type="entry name" value="tRNA_anti-codon"/>
    <property type="match status" value="1"/>
</dbReference>
<dbReference type="PRINTS" id="PR01042">
    <property type="entry name" value="TRNASYNTHASP"/>
</dbReference>
<dbReference type="SUPFAM" id="SSF55681">
    <property type="entry name" value="Class II aaRS and biotin synthetases"/>
    <property type="match status" value="1"/>
</dbReference>
<dbReference type="SUPFAM" id="SSF55261">
    <property type="entry name" value="GAD domain-like"/>
    <property type="match status" value="1"/>
</dbReference>
<dbReference type="SUPFAM" id="SSF50249">
    <property type="entry name" value="Nucleic acid-binding proteins"/>
    <property type="match status" value="1"/>
</dbReference>
<dbReference type="PROSITE" id="PS50862">
    <property type="entry name" value="AA_TRNA_LIGASE_II"/>
    <property type="match status" value="1"/>
</dbReference>
<proteinExistence type="inferred from homology"/>
<accession>Q5HAL5</accession>
<accession>Q5FDC7</accession>
<reference key="1">
    <citation type="journal article" date="2005" name="Proc. Natl. Acad. Sci. U.S.A.">
        <title>The genome of the heartwater agent Ehrlichia ruminantium contains multiple tandem repeats of actively variable copy number.</title>
        <authorList>
            <person name="Collins N.E."/>
            <person name="Liebenberg J."/>
            <person name="de Villiers E.P."/>
            <person name="Brayton K.A."/>
            <person name="Louw E."/>
            <person name="Pretorius A."/>
            <person name="Faber F.E."/>
            <person name="van Heerden H."/>
            <person name="Josemans A."/>
            <person name="van Kleef M."/>
            <person name="Steyn H.C."/>
            <person name="van Strijp M.F."/>
            <person name="Zweygarth E."/>
            <person name="Jongejan F."/>
            <person name="Maillard J.C."/>
            <person name="Berthier D."/>
            <person name="Botha M."/>
            <person name="Joubert F."/>
            <person name="Corton C.H."/>
            <person name="Thomson N.R."/>
            <person name="Allsopp M.T."/>
            <person name="Allsopp B.A."/>
        </authorList>
    </citation>
    <scope>NUCLEOTIDE SEQUENCE [LARGE SCALE GENOMIC DNA]</scope>
    <source>
        <strain>Welgevonden</strain>
    </source>
</reference>
<reference key="2">
    <citation type="journal article" date="2006" name="J. Bacteriol.">
        <title>Comparative genomic analysis of three strains of Ehrlichia ruminantium reveals an active process of genome size plasticity.</title>
        <authorList>
            <person name="Frutos R."/>
            <person name="Viari A."/>
            <person name="Ferraz C."/>
            <person name="Morgat A."/>
            <person name="Eychenie S."/>
            <person name="Kandassamy Y."/>
            <person name="Chantal I."/>
            <person name="Bensaid A."/>
            <person name="Coissac E."/>
            <person name="Vachiery N."/>
            <person name="Demaille J."/>
            <person name="Martinez D."/>
        </authorList>
    </citation>
    <scope>NUCLEOTIDE SEQUENCE [LARGE SCALE GENOMIC DNA]</scope>
    <source>
        <strain>Welgevonden</strain>
    </source>
</reference>
<protein>
    <recommendedName>
        <fullName evidence="1">Aspartate--tRNA(Asp/Asn) ligase</fullName>
        <ecNumber evidence="1">6.1.1.23</ecNumber>
    </recommendedName>
    <alternativeName>
        <fullName evidence="1">Aspartyl-tRNA synthetase</fullName>
        <shortName evidence="1">AspRS</shortName>
    </alternativeName>
    <alternativeName>
        <fullName evidence="1">Non-discriminating aspartyl-tRNA synthetase</fullName>
        <shortName evidence="1">ND-AspRS</shortName>
    </alternativeName>
</protein>
<evidence type="ECO:0000255" key="1">
    <source>
        <dbReference type="HAMAP-Rule" id="MF_00044"/>
    </source>
</evidence>
<gene>
    <name evidence="1" type="primary">aspS</name>
    <name type="ordered locus">Erum6660</name>
    <name type="ordered locus">ERWE_CDS_06980</name>
</gene>